<proteinExistence type="inferred from homology"/>
<sequence>MKIRPLHDRVIVKRKEVESKSAGGIVLTGTAAGKSTRGEVLAVGNGRILDNGEIKPLDVKVGDVVIFNDGYGVKAEKIDNEEVLIMSESDILAIVEA</sequence>
<protein>
    <recommendedName>
        <fullName evidence="1">Co-chaperonin GroES</fullName>
    </recommendedName>
    <alternativeName>
        <fullName evidence="1">10 kDa chaperonin</fullName>
    </alternativeName>
    <alternativeName>
        <fullName evidence="1">Chaperonin-10</fullName>
        <shortName evidence="1">Cpn10</shortName>
    </alternativeName>
</protein>
<evidence type="ECO:0000255" key="1">
    <source>
        <dbReference type="HAMAP-Rule" id="MF_00580"/>
    </source>
</evidence>
<organism>
    <name type="scientific">Yersinia pseudotuberculosis serotype O:3 (strain YPIII)</name>
    <dbReference type="NCBI Taxonomy" id="502800"/>
    <lineage>
        <taxon>Bacteria</taxon>
        <taxon>Pseudomonadati</taxon>
        <taxon>Pseudomonadota</taxon>
        <taxon>Gammaproteobacteria</taxon>
        <taxon>Enterobacterales</taxon>
        <taxon>Yersiniaceae</taxon>
        <taxon>Yersinia</taxon>
    </lineage>
</organism>
<dbReference type="EMBL" id="CP000950">
    <property type="protein sequence ID" value="ACA70089.1"/>
    <property type="molecule type" value="Genomic_DNA"/>
</dbReference>
<dbReference type="RefSeq" id="WP_002209127.1">
    <property type="nucleotide sequence ID" value="NZ_CP009792.1"/>
</dbReference>
<dbReference type="SMR" id="B1JMR2"/>
<dbReference type="KEGG" id="ypy:YPK_3823"/>
<dbReference type="PATRIC" id="fig|502800.11.peg.172"/>
<dbReference type="GO" id="GO:0005737">
    <property type="term" value="C:cytoplasm"/>
    <property type="evidence" value="ECO:0007669"/>
    <property type="project" value="UniProtKB-SubCell"/>
</dbReference>
<dbReference type="GO" id="GO:0005524">
    <property type="term" value="F:ATP binding"/>
    <property type="evidence" value="ECO:0007669"/>
    <property type="project" value="InterPro"/>
</dbReference>
<dbReference type="GO" id="GO:0046872">
    <property type="term" value="F:metal ion binding"/>
    <property type="evidence" value="ECO:0007669"/>
    <property type="project" value="TreeGrafter"/>
</dbReference>
<dbReference type="GO" id="GO:0044183">
    <property type="term" value="F:protein folding chaperone"/>
    <property type="evidence" value="ECO:0007669"/>
    <property type="project" value="InterPro"/>
</dbReference>
<dbReference type="GO" id="GO:0051087">
    <property type="term" value="F:protein-folding chaperone binding"/>
    <property type="evidence" value="ECO:0007669"/>
    <property type="project" value="TreeGrafter"/>
</dbReference>
<dbReference type="GO" id="GO:0051082">
    <property type="term" value="F:unfolded protein binding"/>
    <property type="evidence" value="ECO:0007669"/>
    <property type="project" value="TreeGrafter"/>
</dbReference>
<dbReference type="GO" id="GO:0051085">
    <property type="term" value="P:chaperone cofactor-dependent protein refolding"/>
    <property type="evidence" value="ECO:0007669"/>
    <property type="project" value="TreeGrafter"/>
</dbReference>
<dbReference type="CDD" id="cd00320">
    <property type="entry name" value="cpn10"/>
    <property type="match status" value="1"/>
</dbReference>
<dbReference type="FunFam" id="2.30.33.40:FF:000001">
    <property type="entry name" value="10 kDa chaperonin"/>
    <property type="match status" value="1"/>
</dbReference>
<dbReference type="Gene3D" id="2.30.33.40">
    <property type="entry name" value="GroES chaperonin"/>
    <property type="match status" value="1"/>
</dbReference>
<dbReference type="HAMAP" id="MF_00580">
    <property type="entry name" value="CH10"/>
    <property type="match status" value="1"/>
</dbReference>
<dbReference type="InterPro" id="IPR020818">
    <property type="entry name" value="Chaperonin_GroES"/>
</dbReference>
<dbReference type="InterPro" id="IPR037124">
    <property type="entry name" value="Chaperonin_GroES_sf"/>
</dbReference>
<dbReference type="InterPro" id="IPR018369">
    <property type="entry name" value="Chaprnonin_Cpn10_CS"/>
</dbReference>
<dbReference type="InterPro" id="IPR011032">
    <property type="entry name" value="GroES-like_sf"/>
</dbReference>
<dbReference type="NCBIfam" id="NF001526">
    <property type="entry name" value="PRK00364.1-1"/>
    <property type="match status" value="1"/>
</dbReference>
<dbReference type="NCBIfam" id="NF001527">
    <property type="entry name" value="PRK00364.1-2"/>
    <property type="match status" value="1"/>
</dbReference>
<dbReference type="NCBIfam" id="NF001531">
    <property type="entry name" value="PRK00364.2-2"/>
    <property type="match status" value="1"/>
</dbReference>
<dbReference type="PANTHER" id="PTHR10772">
    <property type="entry name" value="10 KDA HEAT SHOCK PROTEIN"/>
    <property type="match status" value="1"/>
</dbReference>
<dbReference type="PANTHER" id="PTHR10772:SF58">
    <property type="entry name" value="CO-CHAPERONIN GROES"/>
    <property type="match status" value="1"/>
</dbReference>
<dbReference type="Pfam" id="PF00166">
    <property type="entry name" value="Cpn10"/>
    <property type="match status" value="1"/>
</dbReference>
<dbReference type="PRINTS" id="PR00297">
    <property type="entry name" value="CHAPERONIN10"/>
</dbReference>
<dbReference type="SMART" id="SM00883">
    <property type="entry name" value="Cpn10"/>
    <property type="match status" value="1"/>
</dbReference>
<dbReference type="SUPFAM" id="SSF50129">
    <property type="entry name" value="GroES-like"/>
    <property type="match status" value="1"/>
</dbReference>
<dbReference type="PROSITE" id="PS00681">
    <property type="entry name" value="CHAPERONINS_CPN10"/>
    <property type="match status" value="1"/>
</dbReference>
<reference key="1">
    <citation type="submission" date="2008-02" db="EMBL/GenBank/DDBJ databases">
        <title>Complete sequence of Yersinia pseudotuberculosis YPIII.</title>
        <authorList>
            <consortium name="US DOE Joint Genome Institute"/>
            <person name="Copeland A."/>
            <person name="Lucas S."/>
            <person name="Lapidus A."/>
            <person name="Glavina del Rio T."/>
            <person name="Dalin E."/>
            <person name="Tice H."/>
            <person name="Bruce D."/>
            <person name="Goodwin L."/>
            <person name="Pitluck S."/>
            <person name="Munk A.C."/>
            <person name="Brettin T."/>
            <person name="Detter J.C."/>
            <person name="Han C."/>
            <person name="Tapia R."/>
            <person name="Schmutz J."/>
            <person name="Larimer F."/>
            <person name="Land M."/>
            <person name="Hauser L."/>
            <person name="Challacombe J.F."/>
            <person name="Green L."/>
            <person name="Lindler L.E."/>
            <person name="Nikolich M.P."/>
            <person name="Richardson P."/>
        </authorList>
    </citation>
    <scope>NUCLEOTIDE SEQUENCE [LARGE SCALE GENOMIC DNA]</scope>
    <source>
        <strain>YPIII</strain>
    </source>
</reference>
<comment type="function">
    <text evidence="1">Together with the chaperonin GroEL, plays an essential role in assisting protein folding. The GroEL-GroES system forms a nano-cage that allows encapsulation of the non-native substrate proteins and provides a physical environment optimized to promote and accelerate protein folding. GroES binds to the apical surface of the GroEL ring, thereby capping the opening of the GroEL channel.</text>
</comment>
<comment type="subunit">
    <text evidence="1">Heptamer of 7 subunits arranged in a ring. Interacts with the chaperonin GroEL.</text>
</comment>
<comment type="subcellular location">
    <subcellularLocation>
        <location evidence="1">Cytoplasm</location>
    </subcellularLocation>
</comment>
<comment type="similarity">
    <text evidence="1">Belongs to the GroES chaperonin family.</text>
</comment>
<name>CH10_YERPY</name>
<accession>B1JMR2</accession>
<feature type="chain" id="PRO_1000129731" description="Co-chaperonin GroES">
    <location>
        <begin position="1"/>
        <end position="97"/>
    </location>
</feature>
<keyword id="KW-0143">Chaperone</keyword>
<keyword id="KW-0963">Cytoplasm</keyword>
<gene>
    <name evidence="1" type="primary">groES</name>
    <name evidence="1" type="synonym">groS</name>
    <name type="ordered locus">YPK_3823</name>
</gene>